<keyword id="KW-0010">Activator</keyword>
<keyword id="KW-0131">Cell cycle</keyword>
<keyword id="KW-0963">Cytoplasm</keyword>
<keyword id="KW-0217">Developmental protein</keyword>
<keyword id="KW-0221">Differentiation</keyword>
<keyword id="KW-0238">DNA-binding</keyword>
<keyword id="KW-0341">Growth regulation</keyword>
<keyword id="KW-0539">Nucleus</keyword>
<keyword id="KW-0597">Phosphoprotein</keyword>
<keyword id="KW-1185">Reference proteome</keyword>
<keyword id="KW-0804">Transcription</keyword>
<keyword id="KW-0805">Transcription regulation</keyword>
<gene>
    <name evidence="2" type="primary">foxo</name>
    <name type="ORF">GL24235</name>
</gene>
<comment type="function">
    <text evidence="1">Transcription factor involved in the regulation of the insulin signaling pathway. Consistently activates both the downstream target Thor\d4EBP and the feedback control target InR. Involved in negative regulation of the cell cycle, modulating cell growth and proliferation. In response to cellular stresses, such as nutrient deprivation or increased levels of reactive oxygen species, foxo is activated and inhibits growth through the action of target genes such as Thor. Foxo activated in the adult fat body can regulate lifespan in adults; an insulin peptide itself may function as one secondary messenger of insulin-regulated aging. Also regulates Lip4, homolog of human acid lipases, thereby acting as a key modulator of lipid metabolism by insulin signaling and integrates insulin responses to glucose and lipid homeostasis (By similarity).</text>
</comment>
<comment type="subunit">
    <text evidence="2">Interacts with melt.</text>
</comment>
<comment type="subcellular location">
    <subcellularLocation>
        <location evidence="2">Cytoplasm</location>
    </subcellularLocation>
    <subcellularLocation>
        <location evidence="2 3">Nucleus</location>
    </subcellularLocation>
    <text evidence="2">When phosphorylated, translocated from nucleus to cytoplasm. Dephosphorylation triggers nuclear translocation (By similarity).</text>
</comment>
<comment type="sequence caution" evidence="5">
    <conflict type="erroneous gene model prediction">
        <sequence resource="EMBL-CDS" id="EDW24594"/>
    </conflict>
</comment>
<proteinExistence type="inferred from homology"/>
<dbReference type="EMBL" id="AAIZ01000342">
    <property type="status" value="NOT_ANNOTATED_CDS"/>
    <property type="molecule type" value="Genomic_DNA"/>
</dbReference>
<dbReference type="EMBL" id="CH479179">
    <property type="protein sequence ID" value="EDW24594.1"/>
    <property type="status" value="ALT_SEQ"/>
    <property type="molecule type" value="Genomic_DNA"/>
</dbReference>
<dbReference type="RefSeq" id="XP_002013608.1">
    <property type="nucleotide sequence ID" value="XM_002013572.1"/>
</dbReference>
<dbReference type="SMR" id="B4G4S8"/>
<dbReference type="STRING" id="7234.B4G4S8"/>
<dbReference type="eggNOG" id="KOG2294">
    <property type="taxonomic scope" value="Eukaryota"/>
</dbReference>
<dbReference type="OrthoDB" id="5954824at2759"/>
<dbReference type="ChiTaRS" id="foxo">
    <property type="organism name" value="fly"/>
</dbReference>
<dbReference type="Proteomes" id="UP000008744">
    <property type="component" value="Unassembled WGS sequence"/>
</dbReference>
<dbReference type="GO" id="GO:0005737">
    <property type="term" value="C:cytoplasm"/>
    <property type="evidence" value="ECO:0000250"/>
    <property type="project" value="UniProtKB"/>
</dbReference>
<dbReference type="GO" id="GO:0005634">
    <property type="term" value="C:nucleus"/>
    <property type="evidence" value="ECO:0000250"/>
    <property type="project" value="UniProtKB"/>
</dbReference>
<dbReference type="GO" id="GO:0003700">
    <property type="term" value="F:DNA-binding transcription factor activity"/>
    <property type="evidence" value="ECO:0000250"/>
    <property type="project" value="UniProtKB"/>
</dbReference>
<dbReference type="GO" id="GO:0000981">
    <property type="term" value="F:DNA-binding transcription factor activity, RNA polymerase II-specific"/>
    <property type="evidence" value="ECO:0007669"/>
    <property type="project" value="TreeGrafter"/>
</dbReference>
<dbReference type="GO" id="GO:0000978">
    <property type="term" value="F:RNA polymerase II cis-regulatory region sequence-specific DNA binding"/>
    <property type="evidence" value="ECO:0007669"/>
    <property type="project" value="TreeGrafter"/>
</dbReference>
<dbReference type="GO" id="GO:0030154">
    <property type="term" value="P:cell differentiation"/>
    <property type="evidence" value="ECO:0007669"/>
    <property type="project" value="UniProtKB-KW"/>
</dbReference>
<dbReference type="GO" id="GO:0042593">
    <property type="term" value="P:glucose homeostasis"/>
    <property type="evidence" value="ECO:0000250"/>
    <property type="project" value="UniProtKB"/>
</dbReference>
<dbReference type="GO" id="GO:0030308">
    <property type="term" value="P:negative regulation of cell growth"/>
    <property type="evidence" value="ECO:0000250"/>
    <property type="project" value="UniProtKB"/>
</dbReference>
<dbReference type="GO" id="GO:0008285">
    <property type="term" value="P:negative regulation of cell population proliferation"/>
    <property type="evidence" value="ECO:0000250"/>
    <property type="project" value="UniProtKB"/>
</dbReference>
<dbReference type="GO" id="GO:0046627">
    <property type="term" value="P:negative regulation of insulin receptor signaling pathway"/>
    <property type="evidence" value="ECO:0000250"/>
    <property type="project" value="UniProtKB"/>
</dbReference>
<dbReference type="GO" id="GO:0006355">
    <property type="term" value="P:regulation of DNA-templated transcription"/>
    <property type="evidence" value="ECO:0000250"/>
    <property type="project" value="UniProtKB"/>
</dbReference>
<dbReference type="GO" id="GO:0019216">
    <property type="term" value="P:regulation of lipid metabolic process"/>
    <property type="evidence" value="ECO:0000250"/>
    <property type="project" value="UniProtKB"/>
</dbReference>
<dbReference type="CDD" id="cd20032">
    <property type="entry name" value="FH_FOXO"/>
    <property type="match status" value="1"/>
</dbReference>
<dbReference type="FunFam" id="1.10.10.10:FF:000032">
    <property type="entry name" value="Forkhead box protein O4"/>
    <property type="match status" value="1"/>
</dbReference>
<dbReference type="Gene3D" id="1.10.10.10">
    <property type="entry name" value="Winged helix-like DNA-binding domain superfamily/Winged helix DNA-binding domain"/>
    <property type="match status" value="1"/>
</dbReference>
<dbReference type="InterPro" id="IPR001766">
    <property type="entry name" value="Fork_head_dom"/>
</dbReference>
<dbReference type="InterPro" id="IPR030456">
    <property type="entry name" value="TF_fork_head_CS_2"/>
</dbReference>
<dbReference type="InterPro" id="IPR036388">
    <property type="entry name" value="WH-like_DNA-bd_sf"/>
</dbReference>
<dbReference type="InterPro" id="IPR036390">
    <property type="entry name" value="WH_DNA-bd_sf"/>
</dbReference>
<dbReference type="PANTHER" id="PTHR45767">
    <property type="entry name" value="FORKHEAD BOX PROTEIN O"/>
    <property type="match status" value="1"/>
</dbReference>
<dbReference type="PANTHER" id="PTHR45767:SF2">
    <property type="entry name" value="FORKHEAD BOX PROTEIN O"/>
    <property type="match status" value="1"/>
</dbReference>
<dbReference type="Pfam" id="PF00250">
    <property type="entry name" value="Forkhead"/>
    <property type="match status" value="1"/>
</dbReference>
<dbReference type="PRINTS" id="PR00053">
    <property type="entry name" value="FORKHEAD"/>
</dbReference>
<dbReference type="SMART" id="SM00339">
    <property type="entry name" value="FH"/>
    <property type="match status" value="1"/>
</dbReference>
<dbReference type="SUPFAM" id="SSF46785">
    <property type="entry name" value="Winged helix' DNA-binding domain"/>
    <property type="match status" value="1"/>
</dbReference>
<dbReference type="PROSITE" id="PS00658">
    <property type="entry name" value="FORK_HEAD_2"/>
    <property type="match status" value="1"/>
</dbReference>
<dbReference type="PROSITE" id="PS50039">
    <property type="entry name" value="FORK_HEAD_3"/>
    <property type="match status" value="1"/>
</dbReference>
<reference evidence="6" key="1">
    <citation type="journal article" date="2007" name="Nature">
        <title>Evolution of genes and genomes on the Drosophila phylogeny.</title>
        <authorList>
            <consortium name="Drosophila 12 genomes consortium"/>
        </authorList>
    </citation>
    <scope>NUCLEOTIDE SEQUENCE [LARGE SCALE GENOMIC DNA]</scope>
    <source>
        <strain evidence="6">MSH-3 / Tucson 14011-0111.49</strain>
    </source>
</reference>
<accession>B4G4S8</accession>
<evidence type="ECO:0000250" key="1"/>
<evidence type="ECO:0000250" key="2">
    <source>
        <dbReference type="UniProtKB" id="Q95V55"/>
    </source>
</evidence>
<evidence type="ECO:0000255" key="3">
    <source>
        <dbReference type="PROSITE-ProRule" id="PRU00089"/>
    </source>
</evidence>
<evidence type="ECO:0000256" key="4">
    <source>
        <dbReference type="SAM" id="MobiDB-lite"/>
    </source>
</evidence>
<evidence type="ECO:0000305" key="5"/>
<evidence type="ECO:0000312" key="6">
    <source>
        <dbReference type="EMBL" id="EDW24594.1"/>
    </source>
</evidence>
<name>FOXO_DROPE</name>
<protein>
    <recommendedName>
        <fullName evidence="2">Forkhead box protein O</fullName>
    </recommendedName>
</protein>
<feature type="chain" id="PRO_0000396508" description="Forkhead box protein O">
    <location>
        <begin position="1"/>
        <end position="629"/>
    </location>
</feature>
<feature type="DNA-binding region" description="Fork-head" evidence="3">
    <location>
        <begin position="98"/>
        <end position="204"/>
    </location>
</feature>
<feature type="region of interest" description="Disordered" evidence="4">
    <location>
        <begin position="185"/>
        <end position="208"/>
    </location>
</feature>
<feature type="region of interest" description="Disordered" evidence="4">
    <location>
        <begin position="220"/>
        <end position="274"/>
    </location>
</feature>
<feature type="region of interest" description="Disordered" evidence="4">
    <location>
        <begin position="321"/>
        <end position="368"/>
    </location>
</feature>
<feature type="region of interest" description="Disordered" evidence="4">
    <location>
        <begin position="394"/>
        <end position="417"/>
    </location>
</feature>
<feature type="region of interest" description="Disordered" evidence="4">
    <location>
        <begin position="563"/>
        <end position="597"/>
    </location>
</feature>
<feature type="compositionally biased region" description="Polar residues" evidence="4">
    <location>
        <begin position="224"/>
        <end position="233"/>
    </location>
</feature>
<feature type="compositionally biased region" description="Polar residues" evidence="4">
    <location>
        <begin position="259"/>
        <end position="268"/>
    </location>
</feature>
<feature type="compositionally biased region" description="Pro residues" evidence="4">
    <location>
        <begin position="332"/>
        <end position="341"/>
    </location>
</feature>
<feature type="compositionally biased region" description="Low complexity" evidence="4">
    <location>
        <begin position="342"/>
        <end position="356"/>
    </location>
</feature>
<feature type="compositionally biased region" description="Polar residues" evidence="4">
    <location>
        <begin position="394"/>
        <end position="403"/>
    </location>
</feature>
<feature type="modified residue" description="Phosphothreonine; by PKB/AKT1" evidence="2">
    <location>
        <position position="49"/>
    </location>
</feature>
<feature type="modified residue" description="Phosphoserine" evidence="2">
    <location>
        <position position="78"/>
    </location>
</feature>
<feature type="modified residue" description="Phosphoserine; by PKB/AKT1" evidence="2">
    <location>
        <position position="193"/>
    </location>
</feature>
<feature type="modified residue" description="Phosphoserine; by PKB/AKT1" evidence="2">
    <location>
        <position position="262"/>
    </location>
</feature>
<feature type="modified residue" description="Phosphoserine" evidence="2">
    <location>
        <position position="265"/>
    </location>
</feature>
<feature type="modified residue" description="Phosphoserine" evidence="2">
    <location>
        <position position="266"/>
    </location>
</feature>
<feature type="modified residue" description="Phosphoserine" evidence="2">
    <location>
        <position position="271"/>
    </location>
</feature>
<organism>
    <name type="scientific">Drosophila persimilis</name>
    <name type="common">Fruit fly</name>
    <dbReference type="NCBI Taxonomy" id="7234"/>
    <lineage>
        <taxon>Eukaryota</taxon>
        <taxon>Metazoa</taxon>
        <taxon>Ecdysozoa</taxon>
        <taxon>Arthropoda</taxon>
        <taxon>Hexapoda</taxon>
        <taxon>Insecta</taxon>
        <taxon>Pterygota</taxon>
        <taxon>Neoptera</taxon>
        <taxon>Endopterygota</taxon>
        <taxon>Diptera</taxon>
        <taxon>Brachycera</taxon>
        <taxon>Muscomorpha</taxon>
        <taxon>Ephydroidea</taxon>
        <taxon>Drosophilidae</taxon>
        <taxon>Drosophila</taxon>
        <taxon>Sophophora</taxon>
    </lineage>
</organism>
<sequence>MMDSFAQDWPTLTHTDNGLAMDQLSGVVGGGDLPGDVGFEPQTRARSNTWPCPRPENFVEQADELDSTKASNQQLADSQQAIQNANAAKKNSSRRNAWGNLSYADLITHAIGSATDKRLTLSQIYEWMVQNVPYFKDKGDSNSSAGWKNSIRHNLSLHNRFMRVQNEGTGKSSWWMLNPEAKPGKSVRRRAASMETSRYEKRRGRAKKRVEALRQAGVVGLNDATPSPSSSVSEGLDHFPESPLHSGGGFQLSPDFRQRASSNASSCGRLSPIRAQDLEPQDLWGFPVDYQNTTMTQAHAQALEELTGSMADELTLCNQQQQQFSAASGLPSQPPPPPYQPPQLQQQQQQQPSYSLNGPAPGGYQTLQPQSQSQCLLHRSLNCSCLHNARDGLSPNSVTTTMSPAYPNSEPSSDSLNTYSNVVLDGSSDLLVQQQQQQQLQQQQVKVEFEGQCLEVLNNEAQPIDEFNLENFPVGNLECNVEELLQQEMSYDGLLDINIPLANVSTNAPLVSLVNNSTTLSSSSSNLSGSTTTLSSSSLSAAVQLNQLQAQLQQQQQQQQQQQHLQQQQQQHHQHQQQLLLNNNNNNNNNNSSNSSLDLATQTAATNLNAARVQYSQPSVVTSPPSWVH</sequence>